<evidence type="ECO:0000250" key="1"/>
<evidence type="ECO:0000255" key="2"/>
<evidence type="ECO:0000255" key="3">
    <source>
        <dbReference type="PROSITE-ProRule" id="PRU01082"/>
    </source>
</evidence>
<evidence type="ECO:0000256" key="4">
    <source>
        <dbReference type="SAM" id="MobiDB-lite"/>
    </source>
</evidence>
<evidence type="ECO:0000269" key="5">
    <source>
    </source>
</evidence>
<evidence type="ECO:0000305" key="6"/>
<feature type="initiator methionine" description="Removed" evidence="2">
    <location>
        <position position="1"/>
    </location>
</feature>
<feature type="chain" id="PRO_0000367994" description="Probable protein phosphatase 2C 74">
    <location>
        <begin position="2"/>
        <end position="448"/>
    </location>
</feature>
<feature type="domain" description="PPM-type phosphatase" evidence="3">
    <location>
        <begin position="67"/>
        <end position="384"/>
    </location>
</feature>
<feature type="region of interest" description="Disordered" evidence="4">
    <location>
        <begin position="1"/>
        <end position="48"/>
    </location>
</feature>
<feature type="region of interest" description="Disordered" evidence="4">
    <location>
        <begin position="401"/>
        <end position="431"/>
    </location>
</feature>
<feature type="compositionally biased region" description="Basic residues" evidence="4">
    <location>
        <begin position="27"/>
        <end position="37"/>
    </location>
</feature>
<feature type="compositionally biased region" description="Low complexity" evidence="4">
    <location>
        <begin position="412"/>
        <end position="426"/>
    </location>
</feature>
<feature type="binding site" evidence="1">
    <location>
        <position position="103"/>
    </location>
    <ligand>
        <name>Mn(2+)</name>
        <dbReference type="ChEBI" id="CHEBI:29035"/>
        <label>1</label>
    </ligand>
</feature>
<feature type="binding site" evidence="1">
    <location>
        <position position="103"/>
    </location>
    <ligand>
        <name>Mn(2+)</name>
        <dbReference type="ChEBI" id="CHEBI:29035"/>
        <label>2</label>
    </ligand>
</feature>
<feature type="binding site" evidence="1">
    <location>
        <position position="104"/>
    </location>
    <ligand>
        <name>Mn(2+)</name>
        <dbReference type="ChEBI" id="CHEBI:29035"/>
        <label>1</label>
    </ligand>
</feature>
<feature type="binding site" evidence="1">
    <location>
        <position position="329"/>
    </location>
    <ligand>
        <name>Mn(2+)</name>
        <dbReference type="ChEBI" id="CHEBI:29035"/>
        <label>2</label>
    </ligand>
</feature>
<feature type="binding site" evidence="1">
    <location>
        <position position="375"/>
    </location>
    <ligand>
        <name>Mn(2+)</name>
        <dbReference type="ChEBI" id="CHEBI:29035"/>
        <label>2</label>
    </ligand>
</feature>
<feature type="lipid moiety-binding region" description="N-myristoyl glycine" evidence="2">
    <location>
        <position position="2"/>
    </location>
</feature>
<feature type="mutagenesis site" description="Abolishes cell membrane localization." evidence="5">
    <original>G</original>
    <variation>A</variation>
    <location>
        <position position="2"/>
    </location>
</feature>
<feature type="sequence conflict" description="In Ref. 3; AAM47343/AAL31255." evidence="6" ref="3">
    <original>G</original>
    <variation>E</variation>
    <location>
        <position position="57"/>
    </location>
</feature>
<dbReference type="EC" id="3.1.3.16"/>
<dbReference type="EMBL" id="AB026661">
    <property type="protein sequence ID" value="BAB09365.1"/>
    <property type="molecule type" value="Genomic_DNA"/>
</dbReference>
<dbReference type="EMBL" id="CP002688">
    <property type="protein sequence ID" value="AED94062.1"/>
    <property type="molecule type" value="Genomic_DNA"/>
</dbReference>
<dbReference type="EMBL" id="AY061752">
    <property type="protein sequence ID" value="AAL31255.1"/>
    <property type="molecule type" value="mRNA"/>
</dbReference>
<dbReference type="EMBL" id="AY113035">
    <property type="protein sequence ID" value="AAM47343.1"/>
    <property type="molecule type" value="mRNA"/>
</dbReference>
<dbReference type="SMR" id="Q9FG61"/>
<dbReference type="BioGRID" id="18873">
    <property type="interactions" value="1"/>
</dbReference>
<dbReference type="FunCoup" id="Q9FG61">
    <property type="interactions" value="540"/>
</dbReference>
<dbReference type="IntAct" id="Q9FG61">
    <property type="interactions" value="4"/>
</dbReference>
<dbReference type="MINT" id="Q9FG61"/>
<dbReference type="STRING" id="3702.Q9FG61"/>
<dbReference type="iPTMnet" id="Q9FG61"/>
<dbReference type="PaxDb" id="3702-AT5G36250.1"/>
<dbReference type="ProteomicsDB" id="250917"/>
<dbReference type="EnsemblPlants" id="AT5G36250.1">
    <property type="protein sequence ID" value="AT5G36250.1"/>
    <property type="gene ID" value="AT5G36250"/>
</dbReference>
<dbReference type="GeneID" id="833622"/>
<dbReference type="Gramene" id="AT5G36250.1">
    <property type="protein sequence ID" value="AT5G36250.1"/>
    <property type="gene ID" value="AT5G36250"/>
</dbReference>
<dbReference type="KEGG" id="ath:AT5G36250"/>
<dbReference type="Araport" id="AT5G36250"/>
<dbReference type="TAIR" id="AT5G36250">
    <property type="gene designation" value="PP2C74"/>
</dbReference>
<dbReference type="eggNOG" id="KOG0698">
    <property type="taxonomic scope" value="Eukaryota"/>
</dbReference>
<dbReference type="HOGENOM" id="CLU_013173_6_0_1"/>
<dbReference type="InParanoid" id="Q9FG61"/>
<dbReference type="OMA" id="TYESAMS"/>
<dbReference type="OrthoDB" id="1065853at2759"/>
<dbReference type="PhylomeDB" id="Q9FG61"/>
<dbReference type="PRO" id="PR:Q9FG61"/>
<dbReference type="Proteomes" id="UP000006548">
    <property type="component" value="Chromosome 5"/>
</dbReference>
<dbReference type="ExpressionAtlas" id="Q9FG61">
    <property type="expression patterns" value="baseline and differential"/>
</dbReference>
<dbReference type="GO" id="GO:0005634">
    <property type="term" value="C:nucleus"/>
    <property type="evidence" value="ECO:0007005"/>
    <property type="project" value="TAIR"/>
</dbReference>
<dbReference type="GO" id="GO:0005886">
    <property type="term" value="C:plasma membrane"/>
    <property type="evidence" value="ECO:0000314"/>
    <property type="project" value="TAIR"/>
</dbReference>
<dbReference type="GO" id="GO:0046872">
    <property type="term" value="F:metal ion binding"/>
    <property type="evidence" value="ECO:0007669"/>
    <property type="project" value="UniProtKB-KW"/>
</dbReference>
<dbReference type="GO" id="GO:0004721">
    <property type="term" value="F:phosphoprotein phosphatase activity"/>
    <property type="evidence" value="ECO:0000314"/>
    <property type="project" value="TAIR"/>
</dbReference>
<dbReference type="GO" id="GO:0004722">
    <property type="term" value="F:protein serine/threonine phosphatase activity"/>
    <property type="evidence" value="ECO:0007669"/>
    <property type="project" value="UniProtKB-EC"/>
</dbReference>
<dbReference type="GO" id="GO:0006470">
    <property type="term" value="P:protein dephosphorylation"/>
    <property type="evidence" value="ECO:0000314"/>
    <property type="project" value="TAIR"/>
</dbReference>
<dbReference type="CDD" id="cd00143">
    <property type="entry name" value="PP2Cc"/>
    <property type="match status" value="1"/>
</dbReference>
<dbReference type="FunFam" id="3.60.40.10:FF:000024">
    <property type="entry name" value="probable protein phosphatase 2C 33"/>
    <property type="match status" value="1"/>
</dbReference>
<dbReference type="Gene3D" id="3.60.40.10">
    <property type="entry name" value="PPM-type phosphatase domain"/>
    <property type="match status" value="1"/>
</dbReference>
<dbReference type="InterPro" id="IPR015655">
    <property type="entry name" value="PP2C"/>
</dbReference>
<dbReference type="InterPro" id="IPR036457">
    <property type="entry name" value="PPM-type-like_dom_sf"/>
</dbReference>
<dbReference type="InterPro" id="IPR001932">
    <property type="entry name" value="PPM-type_phosphatase-like_dom"/>
</dbReference>
<dbReference type="PANTHER" id="PTHR47992">
    <property type="entry name" value="PROTEIN PHOSPHATASE"/>
    <property type="match status" value="1"/>
</dbReference>
<dbReference type="Pfam" id="PF00481">
    <property type="entry name" value="PP2C"/>
    <property type="match status" value="1"/>
</dbReference>
<dbReference type="SMART" id="SM00332">
    <property type="entry name" value="PP2Cc"/>
    <property type="match status" value="1"/>
</dbReference>
<dbReference type="SUPFAM" id="SSF81606">
    <property type="entry name" value="PP2C-like"/>
    <property type="match status" value="1"/>
</dbReference>
<dbReference type="PROSITE" id="PS51746">
    <property type="entry name" value="PPM_2"/>
    <property type="match status" value="1"/>
</dbReference>
<gene>
    <name type="ordered locus">At5g36250</name>
    <name type="ORF">T30G6.11</name>
</gene>
<protein>
    <recommendedName>
        <fullName>Probable protein phosphatase 2C 74</fullName>
        <shortName>AtPP2C74</shortName>
        <ecNumber>3.1.3.16</ecNumber>
    </recommendedName>
</protein>
<comment type="function">
    <text evidence="5">Acts as a protein phosphatase.</text>
</comment>
<comment type="catalytic activity">
    <reaction>
        <text>O-phospho-L-seryl-[protein] + H2O = L-seryl-[protein] + phosphate</text>
        <dbReference type="Rhea" id="RHEA:20629"/>
        <dbReference type="Rhea" id="RHEA-COMP:9863"/>
        <dbReference type="Rhea" id="RHEA-COMP:11604"/>
        <dbReference type="ChEBI" id="CHEBI:15377"/>
        <dbReference type="ChEBI" id="CHEBI:29999"/>
        <dbReference type="ChEBI" id="CHEBI:43474"/>
        <dbReference type="ChEBI" id="CHEBI:83421"/>
        <dbReference type="EC" id="3.1.3.16"/>
    </reaction>
</comment>
<comment type="catalytic activity">
    <reaction>
        <text>O-phospho-L-threonyl-[protein] + H2O = L-threonyl-[protein] + phosphate</text>
        <dbReference type="Rhea" id="RHEA:47004"/>
        <dbReference type="Rhea" id="RHEA-COMP:11060"/>
        <dbReference type="Rhea" id="RHEA-COMP:11605"/>
        <dbReference type="ChEBI" id="CHEBI:15377"/>
        <dbReference type="ChEBI" id="CHEBI:30013"/>
        <dbReference type="ChEBI" id="CHEBI:43474"/>
        <dbReference type="ChEBI" id="CHEBI:61977"/>
        <dbReference type="EC" id="3.1.3.16"/>
    </reaction>
</comment>
<comment type="cofactor">
    <cofactor evidence="1">
        <name>Mg(2+)</name>
        <dbReference type="ChEBI" id="CHEBI:18420"/>
    </cofactor>
    <cofactor evidence="1">
        <name>Mn(2+)</name>
        <dbReference type="ChEBI" id="CHEBI:29035"/>
    </cofactor>
    <text evidence="1">Binds 2 magnesium or manganese ions per subunit.</text>
</comment>
<comment type="subunit">
    <text evidence="5">Interacts with KIN10.</text>
</comment>
<comment type="interaction">
    <interactant intactId="EBI-4437407">
        <id>Q9FG61</id>
    </interactant>
    <interactant intactId="EBI-7801898">
        <id>B9DFC1</id>
        <label>At3g01090</label>
    </interactant>
    <organismsDiffer>false</organismsDiffer>
    <experiments>2</experiments>
</comment>
<comment type="subcellular location">
    <subcellularLocation>
        <location evidence="5">Cell membrane</location>
    </subcellularLocation>
</comment>
<comment type="tissue specificity">
    <text evidence="5">Expressed in the whole plant.</text>
</comment>
<comment type="similarity">
    <text evidence="6">Belongs to the PP2C family.</text>
</comment>
<organism>
    <name type="scientific">Arabidopsis thaliana</name>
    <name type="common">Mouse-ear cress</name>
    <dbReference type="NCBI Taxonomy" id="3702"/>
    <lineage>
        <taxon>Eukaryota</taxon>
        <taxon>Viridiplantae</taxon>
        <taxon>Streptophyta</taxon>
        <taxon>Embryophyta</taxon>
        <taxon>Tracheophyta</taxon>
        <taxon>Spermatophyta</taxon>
        <taxon>Magnoliopsida</taxon>
        <taxon>eudicotyledons</taxon>
        <taxon>Gunneridae</taxon>
        <taxon>Pentapetalae</taxon>
        <taxon>rosids</taxon>
        <taxon>malvids</taxon>
        <taxon>Brassicales</taxon>
        <taxon>Brassicaceae</taxon>
        <taxon>Camelineae</taxon>
        <taxon>Arabidopsis</taxon>
    </lineage>
</organism>
<sequence>MGSCLSSSGGGGSRRSLHGSPHVPGPGRRKRPPKRRPGSCSSSFDNTEEPLLHRIPGRMFLNGSTDTVSLFSQQGKKGPNQDAMIVWENFGSMEDTVFCGVFDGHGPYGHIVAKRVRDLLPLKLGSHLESYVSPEEVLKEISLNTDDRKISEDLVHISANGESRVYNKDYVKDQDMIQMLIGSIVKAYRFMDKELKMQVDVDCFCSGTTAVTMVKQGQHLVIGNIGDSRAVLGVRNKDNKLVPFQLTEDLKPDVPAEAERIKRCRGRIFALRDEPGVARLWLPNHNSPGLAMARAFGDFCLKDFGLISVPDVSYRRLTEKDEFVVLATDGIWDALTNEEVVKIVAKAPTRSSAGRALVEAAVRNWRWKFPTSKVDDCAVVCLFLDSEPNRLSTASFSKEKHINNGVTEPEPDTASSSTPDSGTGSPELNGVNRIDTLVNLPVYVPTKE</sequence>
<proteinExistence type="evidence at protein level"/>
<reference key="1">
    <citation type="submission" date="1999-04" db="EMBL/GenBank/DDBJ databases">
        <title>Structural analysis of Arabidopsis thaliana chromosome 5. XI.</title>
        <authorList>
            <person name="Kaneko T."/>
            <person name="Katoh T."/>
            <person name="Asamizu E."/>
            <person name="Sato S."/>
            <person name="Nakamura Y."/>
            <person name="Kotani H."/>
            <person name="Tabata S."/>
        </authorList>
    </citation>
    <scope>NUCLEOTIDE SEQUENCE [LARGE SCALE GENOMIC DNA]</scope>
    <source>
        <strain>cv. Columbia</strain>
    </source>
</reference>
<reference key="2">
    <citation type="journal article" date="2017" name="Plant J.">
        <title>Araport11: a complete reannotation of the Arabidopsis thaliana reference genome.</title>
        <authorList>
            <person name="Cheng C.Y."/>
            <person name="Krishnakumar V."/>
            <person name="Chan A.P."/>
            <person name="Thibaud-Nissen F."/>
            <person name="Schobel S."/>
            <person name="Town C.D."/>
        </authorList>
    </citation>
    <scope>GENOME REANNOTATION</scope>
    <source>
        <strain>cv. Columbia</strain>
    </source>
</reference>
<reference key="3">
    <citation type="journal article" date="2003" name="Science">
        <title>Empirical analysis of transcriptional activity in the Arabidopsis genome.</title>
        <authorList>
            <person name="Yamada K."/>
            <person name="Lim J."/>
            <person name="Dale J.M."/>
            <person name="Chen H."/>
            <person name="Shinn P."/>
            <person name="Palm C.J."/>
            <person name="Southwick A.M."/>
            <person name="Wu H.C."/>
            <person name="Kim C.J."/>
            <person name="Nguyen M."/>
            <person name="Pham P.K."/>
            <person name="Cheuk R.F."/>
            <person name="Karlin-Newmann G."/>
            <person name="Liu S.X."/>
            <person name="Lam B."/>
            <person name="Sakano H."/>
            <person name="Wu T."/>
            <person name="Yu G."/>
            <person name="Miranda M."/>
            <person name="Quach H.L."/>
            <person name="Tripp M."/>
            <person name="Chang C.H."/>
            <person name="Lee J.M."/>
            <person name="Toriumi M.J."/>
            <person name="Chan M.M."/>
            <person name="Tang C.C."/>
            <person name="Onodera C.S."/>
            <person name="Deng J.M."/>
            <person name="Akiyama K."/>
            <person name="Ansari Y."/>
            <person name="Arakawa T."/>
            <person name="Banh J."/>
            <person name="Banno F."/>
            <person name="Bowser L."/>
            <person name="Brooks S.Y."/>
            <person name="Carninci P."/>
            <person name="Chao Q."/>
            <person name="Choy N."/>
            <person name="Enju A."/>
            <person name="Goldsmith A.D."/>
            <person name="Gurjal M."/>
            <person name="Hansen N.F."/>
            <person name="Hayashizaki Y."/>
            <person name="Johnson-Hopson C."/>
            <person name="Hsuan V.W."/>
            <person name="Iida K."/>
            <person name="Karnes M."/>
            <person name="Khan S."/>
            <person name="Koesema E."/>
            <person name="Ishida J."/>
            <person name="Jiang P.X."/>
            <person name="Jones T."/>
            <person name="Kawai J."/>
            <person name="Kamiya A."/>
            <person name="Meyers C."/>
            <person name="Nakajima M."/>
            <person name="Narusaka M."/>
            <person name="Seki M."/>
            <person name="Sakurai T."/>
            <person name="Satou M."/>
            <person name="Tamse R."/>
            <person name="Vaysberg M."/>
            <person name="Wallender E.K."/>
            <person name="Wong C."/>
            <person name="Yamamura Y."/>
            <person name="Yuan S."/>
            <person name="Shinozaki K."/>
            <person name="Davis R.W."/>
            <person name="Theologis A."/>
            <person name="Ecker J.R."/>
        </authorList>
    </citation>
    <scope>NUCLEOTIDE SEQUENCE [LARGE SCALE MRNA]</scope>
    <source>
        <strain>cv. Columbia</strain>
    </source>
</reference>
<reference key="4">
    <citation type="journal article" date="2008" name="BMC Genomics">
        <title>Genome-wide and expression analysis of protein phosphatase 2C in rice and Arabidopsis.</title>
        <authorList>
            <person name="Xue T."/>
            <person name="Wang D."/>
            <person name="Zhang S."/>
            <person name="Ehlting J."/>
            <person name="Ni F."/>
            <person name="Jacab S."/>
            <person name="Zheng C."/>
            <person name="Zhong Y."/>
        </authorList>
    </citation>
    <scope>GENE FAMILY</scope>
    <scope>NOMENCLATURE</scope>
</reference>
<reference key="5">
    <citation type="journal article" date="2012" name="FEBS Lett.">
        <title>A putative myristoylated 2C-type protein phosphatase, PP2C74, interacts with SnRK1 in Arabidopsis.</title>
        <authorList>
            <person name="Tsugama D."/>
            <person name="Liu S."/>
            <person name="Takano T."/>
        </authorList>
    </citation>
    <scope>INTERACTION WITH KIN10</scope>
    <scope>TISSUE SPECIFICITY</scope>
    <scope>FUNCTION</scope>
    <scope>SUBCELLULAR LOCATION</scope>
    <scope>MUTAGENESIS OF GLY-2</scope>
</reference>
<keyword id="KW-1003">Cell membrane</keyword>
<keyword id="KW-0378">Hydrolase</keyword>
<keyword id="KW-0449">Lipoprotein</keyword>
<keyword id="KW-0460">Magnesium</keyword>
<keyword id="KW-0464">Manganese</keyword>
<keyword id="KW-0472">Membrane</keyword>
<keyword id="KW-0479">Metal-binding</keyword>
<keyword id="KW-0519">Myristate</keyword>
<keyword id="KW-0904">Protein phosphatase</keyword>
<keyword id="KW-1185">Reference proteome</keyword>
<name>P2C74_ARATH</name>
<accession>Q9FG61</accession>
<accession>Q8W4Q9</accession>